<dbReference type="EMBL" id="CP000975">
    <property type="protein sequence ID" value="ACD82756.1"/>
    <property type="molecule type" value="Genomic_DNA"/>
</dbReference>
<dbReference type="RefSeq" id="WP_012463038.1">
    <property type="nucleotide sequence ID" value="NC_010794.1"/>
</dbReference>
<dbReference type="SMR" id="B3E0K2"/>
<dbReference type="STRING" id="481448.Minf_0701"/>
<dbReference type="KEGG" id="min:Minf_0701"/>
<dbReference type="eggNOG" id="COG0200">
    <property type="taxonomic scope" value="Bacteria"/>
</dbReference>
<dbReference type="HOGENOM" id="CLU_055188_4_2_0"/>
<dbReference type="OrthoDB" id="9810293at2"/>
<dbReference type="Proteomes" id="UP000009149">
    <property type="component" value="Chromosome"/>
</dbReference>
<dbReference type="GO" id="GO:0022625">
    <property type="term" value="C:cytosolic large ribosomal subunit"/>
    <property type="evidence" value="ECO:0007669"/>
    <property type="project" value="TreeGrafter"/>
</dbReference>
<dbReference type="GO" id="GO:0019843">
    <property type="term" value="F:rRNA binding"/>
    <property type="evidence" value="ECO:0007669"/>
    <property type="project" value="UniProtKB-UniRule"/>
</dbReference>
<dbReference type="GO" id="GO:0003735">
    <property type="term" value="F:structural constituent of ribosome"/>
    <property type="evidence" value="ECO:0007669"/>
    <property type="project" value="InterPro"/>
</dbReference>
<dbReference type="GO" id="GO:0006412">
    <property type="term" value="P:translation"/>
    <property type="evidence" value="ECO:0007669"/>
    <property type="project" value="UniProtKB-UniRule"/>
</dbReference>
<dbReference type="Gene3D" id="3.100.10.10">
    <property type="match status" value="1"/>
</dbReference>
<dbReference type="HAMAP" id="MF_01341">
    <property type="entry name" value="Ribosomal_uL15"/>
    <property type="match status" value="1"/>
</dbReference>
<dbReference type="InterPro" id="IPR030878">
    <property type="entry name" value="Ribosomal_uL15"/>
</dbReference>
<dbReference type="InterPro" id="IPR021131">
    <property type="entry name" value="Ribosomal_uL15/eL18"/>
</dbReference>
<dbReference type="InterPro" id="IPR036227">
    <property type="entry name" value="Ribosomal_uL15/eL18_sf"/>
</dbReference>
<dbReference type="InterPro" id="IPR005749">
    <property type="entry name" value="Ribosomal_uL15_bac-type"/>
</dbReference>
<dbReference type="NCBIfam" id="TIGR01071">
    <property type="entry name" value="rplO_bact"/>
    <property type="match status" value="1"/>
</dbReference>
<dbReference type="PANTHER" id="PTHR12934">
    <property type="entry name" value="50S RIBOSOMAL PROTEIN L15"/>
    <property type="match status" value="1"/>
</dbReference>
<dbReference type="PANTHER" id="PTHR12934:SF11">
    <property type="entry name" value="LARGE RIBOSOMAL SUBUNIT PROTEIN UL15M"/>
    <property type="match status" value="1"/>
</dbReference>
<dbReference type="Pfam" id="PF00828">
    <property type="entry name" value="Ribosomal_L27A"/>
    <property type="match status" value="1"/>
</dbReference>
<dbReference type="SUPFAM" id="SSF52080">
    <property type="entry name" value="Ribosomal proteins L15p and L18e"/>
    <property type="match status" value="1"/>
</dbReference>
<gene>
    <name evidence="1" type="primary">rplO</name>
    <name type="ordered locus">Minf_0701</name>
</gene>
<sequence length="150" mass="16246">MMLNDVRPAIGAKKRKKRVGCGESSGHGKTSGRGHKGQKARAGGSIRIGFEGGQMPLIRRIPKRGFNNKLFHVFYAPVNLSALQGIQQEVIDESLLRQIGVVKGKWDGIKILGKGEITQAYTFKVHAVSASAKEKIEKAGGKIELIKSTP</sequence>
<accession>B3E0K2</accession>
<organism>
    <name type="scientific">Methylacidiphilum infernorum (isolate V4)</name>
    <name type="common">Methylokorus infernorum (strain V4)</name>
    <dbReference type="NCBI Taxonomy" id="481448"/>
    <lineage>
        <taxon>Bacteria</taxon>
        <taxon>Pseudomonadati</taxon>
        <taxon>Verrucomicrobiota</taxon>
        <taxon>Methylacidiphilae</taxon>
        <taxon>Methylacidiphilales</taxon>
        <taxon>Methylacidiphilaceae</taxon>
        <taxon>Methylacidiphilum (ex Ratnadevi et al. 2023)</taxon>
    </lineage>
</organism>
<protein>
    <recommendedName>
        <fullName evidence="1">Large ribosomal subunit protein uL15</fullName>
    </recommendedName>
    <alternativeName>
        <fullName evidence="3">50S ribosomal protein L15</fullName>
    </alternativeName>
</protein>
<reference key="1">
    <citation type="journal article" date="2008" name="Biol. Direct">
        <title>Complete genome sequence of the extremely acidophilic methanotroph isolate V4, Methylacidiphilum infernorum, a representative of the bacterial phylum Verrucomicrobia.</title>
        <authorList>
            <person name="Hou S."/>
            <person name="Makarova K.S."/>
            <person name="Saw J.H."/>
            <person name="Senin P."/>
            <person name="Ly B.V."/>
            <person name="Zhou Z."/>
            <person name="Ren Y."/>
            <person name="Wang J."/>
            <person name="Galperin M.Y."/>
            <person name="Omelchenko M.V."/>
            <person name="Wolf Y.I."/>
            <person name="Yutin N."/>
            <person name="Koonin E.V."/>
            <person name="Stott M.B."/>
            <person name="Mountain B.W."/>
            <person name="Crowe M.A."/>
            <person name="Smirnova A.V."/>
            <person name="Dunfield P.F."/>
            <person name="Feng L."/>
            <person name="Wang L."/>
            <person name="Alam M."/>
        </authorList>
    </citation>
    <scope>NUCLEOTIDE SEQUENCE [LARGE SCALE GENOMIC DNA]</scope>
    <source>
        <strain>Isolate V4</strain>
    </source>
</reference>
<feature type="chain" id="PRO_1000142839" description="Large ribosomal subunit protein uL15">
    <location>
        <begin position="1"/>
        <end position="150"/>
    </location>
</feature>
<feature type="region of interest" description="Disordered" evidence="2">
    <location>
        <begin position="12"/>
        <end position="43"/>
    </location>
</feature>
<feature type="compositionally biased region" description="Basic residues" evidence="2">
    <location>
        <begin position="30"/>
        <end position="39"/>
    </location>
</feature>
<comment type="function">
    <text evidence="1">Binds to the 23S rRNA.</text>
</comment>
<comment type="subunit">
    <text evidence="1">Part of the 50S ribosomal subunit.</text>
</comment>
<comment type="similarity">
    <text evidence="1">Belongs to the universal ribosomal protein uL15 family.</text>
</comment>
<evidence type="ECO:0000255" key="1">
    <source>
        <dbReference type="HAMAP-Rule" id="MF_01341"/>
    </source>
</evidence>
<evidence type="ECO:0000256" key="2">
    <source>
        <dbReference type="SAM" id="MobiDB-lite"/>
    </source>
</evidence>
<evidence type="ECO:0000305" key="3"/>
<proteinExistence type="inferred from homology"/>
<name>RL15_METI4</name>
<keyword id="KW-0687">Ribonucleoprotein</keyword>
<keyword id="KW-0689">Ribosomal protein</keyword>
<keyword id="KW-0694">RNA-binding</keyword>
<keyword id="KW-0699">rRNA-binding</keyword>